<reference key="1">
    <citation type="journal article" date="2000" name="Proc. Natl. Acad. Sci. U.S.A.">
        <title>Archaeal adaptation to higher temperatures revealed by genomic sequence of Thermoplasma volcanium.</title>
        <authorList>
            <person name="Kawashima T."/>
            <person name="Amano N."/>
            <person name="Koike H."/>
            <person name="Makino S."/>
            <person name="Higuchi S."/>
            <person name="Kawashima-Ohya Y."/>
            <person name="Watanabe K."/>
            <person name="Yamazaki M."/>
            <person name="Kanehori K."/>
            <person name="Kawamoto T."/>
            <person name="Nunoshiba T."/>
            <person name="Yamamoto Y."/>
            <person name="Aramaki H."/>
            <person name="Makino K."/>
            <person name="Suzuki M."/>
        </authorList>
    </citation>
    <scope>NUCLEOTIDE SEQUENCE [LARGE SCALE GENOMIC DNA]</scope>
    <source>
        <strain>ATCC 51530 / DSM 4299 / JCM 9571 / NBRC 15438 / GSS1</strain>
    </source>
</reference>
<evidence type="ECO:0000255" key="1">
    <source>
        <dbReference type="HAMAP-Rule" id="MF_00171"/>
    </source>
</evidence>
<accession>Q979R4</accession>
<proteinExistence type="inferred from homology"/>
<feature type="chain" id="PRO_0000057516" description="tRNA pseudouridine synthase A">
    <location>
        <begin position="1"/>
        <end position="246"/>
    </location>
</feature>
<feature type="active site" description="Nucleophile" evidence="1">
    <location>
        <position position="51"/>
    </location>
</feature>
<feature type="binding site" evidence="1">
    <location>
        <position position="105"/>
    </location>
    <ligand>
        <name>substrate</name>
    </ligand>
</feature>
<gene>
    <name evidence="1" type="primary">truA</name>
    <name type="ordered locus">TV1096</name>
    <name type="ORF">TVG1128771</name>
</gene>
<sequence length="246" mass="28353">MTHAYFFKFGYIGYMFTGYQRGNGVKSVEDTIIKALNLNSPSLIKTAARTDRGVSALSNVFYIETERRPQDIAGIINSKNEYVFVHSFAEVEHGRNPRYCDTKTYMYMLPGETECDSLMVTASGFLGFHDFSKFSKKDTRNPWRSIDEVKCHRESFGVVLEFSAKSFLWNQVRRMLAFILEFRGNKIDPFSVSNIYSHIAPPENLILKDIVYKDLSFKPLNNGLKRQRLMMEKSLISYIVLKNVLG</sequence>
<protein>
    <recommendedName>
        <fullName evidence="1">tRNA pseudouridine synthase A</fullName>
        <ecNumber evidence="1">5.4.99.12</ecNumber>
    </recommendedName>
    <alternativeName>
        <fullName evidence="1">tRNA pseudouridine(38-40) synthase</fullName>
    </alternativeName>
    <alternativeName>
        <fullName evidence="1">tRNA pseudouridylate synthase I</fullName>
    </alternativeName>
    <alternativeName>
        <fullName evidence="1">tRNA-uridine isomerase I</fullName>
    </alternativeName>
</protein>
<dbReference type="EC" id="5.4.99.12" evidence="1"/>
<dbReference type="EMBL" id="BA000011">
    <property type="protein sequence ID" value="BAB60238.1"/>
    <property type="molecule type" value="Genomic_DNA"/>
</dbReference>
<dbReference type="SMR" id="Q979R4"/>
<dbReference type="STRING" id="273116.gene:9381893"/>
<dbReference type="PaxDb" id="273116-14325334"/>
<dbReference type="KEGG" id="tvo:TVG1128771"/>
<dbReference type="eggNOG" id="arCOG04449">
    <property type="taxonomic scope" value="Archaea"/>
</dbReference>
<dbReference type="HOGENOM" id="CLU_014673_4_2_2"/>
<dbReference type="PhylomeDB" id="Q979R4"/>
<dbReference type="Proteomes" id="UP000001017">
    <property type="component" value="Chromosome"/>
</dbReference>
<dbReference type="GO" id="GO:0003723">
    <property type="term" value="F:RNA binding"/>
    <property type="evidence" value="ECO:0007669"/>
    <property type="project" value="InterPro"/>
</dbReference>
<dbReference type="GO" id="GO:0160147">
    <property type="term" value="F:tRNA pseudouridine(38-40) synthase activity"/>
    <property type="evidence" value="ECO:0007669"/>
    <property type="project" value="UniProtKB-EC"/>
</dbReference>
<dbReference type="GO" id="GO:0031119">
    <property type="term" value="P:tRNA pseudouridine synthesis"/>
    <property type="evidence" value="ECO:0007669"/>
    <property type="project" value="UniProtKB-UniRule"/>
</dbReference>
<dbReference type="CDD" id="cd00497">
    <property type="entry name" value="PseudoU_synth_TruA_like"/>
    <property type="match status" value="1"/>
</dbReference>
<dbReference type="Gene3D" id="3.30.70.660">
    <property type="entry name" value="Pseudouridine synthase I, catalytic domain, C-terminal subdomain"/>
    <property type="match status" value="1"/>
</dbReference>
<dbReference type="HAMAP" id="MF_00171">
    <property type="entry name" value="TruA"/>
    <property type="match status" value="1"/>
</dbReference>
<dbReference type="InterPro" id="IPR020103">
    <property type="entry name" value="PsdUridine_synth_cat_dom_sf"/>
</dbReference>
<dbReference type="InterPro" id="IPR001406">
    <property type="entry name" value="PsdUridine_synth_TruA"/>
</dbReference>
<dbReference type="InterPro" id="IPR020097">
    <property type="entry name" value="PsdUridine_synth_TruA_a/b_dom"/>
</dbReference>
<dbReference type="InterPro" id="IPR020095">
    <property type="entry name" value="PsdUridine_synth_TruA_C"/>
</dbReference>
<dbReference type="PANTHER" id="PTHR11142">
    <property type="entry name" value="PSEUDOURIDYLATE SYNTHASE"/>
    <property type="match status" value="1"/>
</dbReference>
<dbReference type="PANTHER" id="PTHR11142:SF0">
    <property type="entry name" value="TRNA PSEUDOURIDINE SYNTHASE-LIKE 1"/>
    <property type="match status" value="1"/>
</dbReference>
<dbReference type="Pfam" id="PF01416">
    <property type="entry name" value="PseudoU_synth_1"/>
    <property type="match status" value="1"/>
</dbReference>
<dbReference type="PIRSF" id="PIRSF001430">
    <property type="entry name" value="tRNA_psdUrid_synth"/>
    <property type="match status" value="1"/>
</dbReference>
<dbReference type="SUPFAM" id="SSF55120">
    <property type="entry name" value="Pseudouridine synthase"/>
    <property type="match status" value="1"/>
</dbReference>
<keyword id="KW-0413">Isomerase</keyword>
<keyword id="KW-0819">tRNA processing</keyword>
<name>TRUA_THEVO</name>
<comment type="function">
    <text evidence="1">Formation of pseudouridine at positions 38, 39 and 40 in the anticodon stem and loop of transfer RNAs.</text>
</comment>
<comment type="catalytic activity">
    <reaction evidence="1">
        <text>uridine(38/39/40) in tRNA = pseudouridine(38/39/40) in tRNA</text>
        <dbReference type="Rhea" id="RHEA:22376"/>
        <dbReference type="Rhea" id="RHEA-COMP:10085"/>
        <dbReference type="Rhea" id="RHEA-COMP:10087"/>
        <dbReference type="ChEBI" id="CHEBI:65314"/>
        <dbReference type="ChEBI" id="CHEBI:65315"/>
        <dbReference type="EC" id="5.4.99.12"/>
    </reaction>
</comment>
<comment type="similarity">
    <text evidence="1">Belongs to the tRNA pseudouridine synthase TruA family.</text>
</comment>
<organism>
    <name type="scientific">Thermoplasma volcanium (strain ATCC 51530 / DSM 4299 / JCM 9571 / NBRC 15438 / GSS1)</name>
    <dbReference type="NCBI Taxonomy" id="273116"/>
    <lineage>
        <taxon>Archaea</taxon>
        <taxon>Methanobacteriati</taxon>
        <taxon>Thermoplasmatota</taxon>
        <taxon>Thermoplasmata</taxon>
        <taxon>Thermoplasmatales</taxon>
        <taxon>Thermoplasmataceae</taxon>
        <taxon>Thermoplasma</taxon>
    </lineage>
</organism>